<reference key="1">
    <citation type="journal article" date="2004" name="Nat. Genet.">
        <title>Reductive evolution suggested from the complete genome sequence of a plant-pathogenic phytoplasma.</title>
        <authorList>
            <person name="Oshima K."/>
            <person name="Kakizawa S."/>
            <person name="Nishigawa H."/>
            <person name="Jung H.-Y."/>
            <person name="Wei W."/>
            <person name="Suzuki S."/>
            <person name="Arashida R."/>
            <person name="Nakata D."/>
            <person name="Miyata S."/>
            <person name="Ugaki M."/>
            <person name="Namba S."/>
        </authorList>
    </citation>
    <scope>NUCLEOTIDE SEQUENCE [LARGE SCALE GENOMIC DNA]</scope>
    <source>
        <strain>OY-M</strain>
    </source>
</reference>
<evidence type="ECO:0000255" key="1">
    <source>
        <dbReference type="HAMAP-Rule" id="MF_00291"/>
    </source>
</evidence>
<evidence type="ECO:0000256" key="2">
    <source>
        <dbReference type="SAM" id="MobiDB-lite"/>
    </source>
</evidence>
<evidence type="ECO:0000305" key="3"/>
<dbReference type="EMBL" id="AP006628">
    <property type="protein sequence ID" value="BAD04250.1"/>
    <property type="molecule type" value="Genomic_DNA"/>
</dbReference>
<dbReference type="SMR" id="Q6YR51"/>
<dbReference type="STRING" id="262768.PAM_165"/>
<dbReference type="KEGG" id="poy:PAM_165"/>
<dbReference type="eggNOG" id="COG0052">
    <property type="taxonomic scope" value="Bacteria"/>
</dbReference>
<dbReference type="HOGENOM" id="CLU_040318_1_2_14"/>
<dbReference type="BioCyc" id="OYEL262768:G1G26-204-MONOMER"/>
<dbReference type="Proteomes" id="UP000002523">
    <property type="component" value="Chromosome"/>
</dbReference>
<dbReference type="GO" id="GO:0022627">
    <property type="term" value="C:cytosolic small ribosomal subunit"/>
    <property type="evidence" value="ECO:0007669"/>
    <property type="project" value="TreeGrafter"/>
</dbReference>
<dbReference type="GO" id="GO:0003735">
    <property type="term" value="F:structural constituent of ribosome"/>
    <property type="evidence" value="ECO:0007669"/>
    <property type="project" value="InterPro"/>
</dbReference>
<dbReference type="GO" id="GO:0006412">
    <property type="term" value="P:translation"/>
    <property type="evidence" value="ECO:0007669"/>
    <property type="project" value="UniProtKB-UniRule"/>
</dbReference>
<dbReference type="CDD" id="cd01425">
    <property type="entry name" value="RPS2"/>
    <property type="match status" value="1"/>
</dbReference>
<dbReference type="FunFam" id="1.10.287.610:FF:000001">
    <property type="entry name" value="30S ribosomal protein S2"/>
    <property type="match status" value="1"/>
</dbReference>
<dbReference type="Gene3D" id="3.40.50.10490">
    <property type="entry name" value="Glucose-6-phosphate isomerase like protein, domain 1"/>
    <property type="match status" value="1"/>
</dbReference>
<dbReference type="Gene3D" id="1.10.287.610">
    <property type="entry name" value="Helix hairpin bin"/>
    <property type="match status" value="1"/>
</dbReference>
<dbReference type="HAMAP" id="MF_00291_B">
    <property type="entry name" value="Ribosomal_uS2_B"/>
    <property type="match status" value="1"/>
</dbReference>
<dbReference type="InterPro" id="IPR001865">
    <property type="entry name" value="Ribosomal_uS2"/>
</dbReference>
<dbReference type="InterPro" id="IPR005706">
    <property type="entry name" value="Ribosomal_uS2_bac/mit/plastid"/>
</dbReference>
<dbReference type="InterPro" id="IPR023591">
    <property type="entry name" value="Ribosomal_uS2_flav_dom_sf"/>
</dbReference>
<dbReference type="NCBIfam" id="TIGR01011">
    <property type="entry name" value="rpsB_bact"/>
    <property type="match status" value="1"/>
</dbReference>
<dbReference type="PANTHER" id="PTHR12534">
    <property type="entry name" value="30S RIBOSOMAL PROTEIN S2 PROKARYOTIC AND ORGANELLAR"/>
    <property type="match status" value="1"/>
</dbReference>
<dbReference type="PANTHER" id="PTHR12534:SF0">
    <property type="entry name" value="SMALL RIBOSOMAL SUBUNIT PROTEIN US2M"/>
    <property type="match status" value="1"/>
</dbReference>
<dbReference type="Pfam" id="PF00318">
    <property type="entry name" value="Ribosomal_S2"/>
    <property type="match status" value="1"/>
</dbReference>
<dbReference type="PRINTS" id="PR00395">
    <property type="entry name" value="RIBOSOMALS2"/>
</dbReference>
<dbReference type="SUPFAM" id="SSF52313">
    <property type="entry name" value="Ribosomal protein S2"/>
    <property type="match status" value="1"/>
</dbReference>
<name>RS2_ONYPE</name>
<protein>
    <recommendedName>
        <fullName evidence="1">Small ribosomal subunit protein uS2</fullName>
    </recommendedName>
    <alternativeName>
        <fullName evidence="3">30S ribosomal protein S2</fullName>
    </alternativeName>
</protein>
<comment type="similarity">
    <text evidence="1">Belongs to the universal ribosomal protein uS2 family.</text>
</comment>
<keyword id="KW-0687">Ribonucleoprotein</keyword>
<keyword id="KW-0689">Ribosomal protein</keyword>
<organism>
    <name type="scientific">Onion yellows phytoplasma (strain OY-M)</name>
    <dbReference type="NCBI Taxonomy" id="262768"/>
    <lineage>
        <taxon>Bacteria</taxon>
        <taxon>Bacillati</taxon>
        <taxon>Mycoplasmatota</taxon>
        <taxon>Mollicutes</taxon>
        <taxon>Acholeplasmatales</taxon>
        <taxon>Acholeplasmataceae</taxon>
        <taxon>Candidatus Phytoplasma</taxon>
        <taxon>16SrI (Aster yellows group)</taxon>
    </lineage>
</organism>
<accession>Q6YR51</accession>
<sequence>MAVVTTKQLLESGVYFGHATRKWNPKMKPYIFTSRNGIHIINLKKTSEEIEKAYQELLNIITSGGKALFLGTKKQIQSAIREEAQRSQQYYVDHRWLGGTLTNFKTILKRIELLHLLHKQEEEGLWKKLPKKEVVQLKRKRDKLEKFLGGIKDMKDLPQAIFVVDPEKESIAVAEARKLGIKVFGIVDTNCDPDLVDYIIPANDDAIRGVKLIIWLMANACVEGTGGVAEKAETFDAKNPLKPQNYNAPNKRPYQDSPRKPSYQNQNQNQI</sequence>
<proteinExistence type="inferred from homology"/>
<gene>
    <name evidence="1" type="primary">rpsB</name>
    <name type="ordered locus">PAM_165</name>
</gene>
<feature type="chain" id="PRO_0000134209" description="Small ribosomal subunit protein uS2">
    <location>
        <begin position="1"/>
        <end position="271"/>
    </location>
</feature>
<feature type="region of interest" description="Disordered" evidence="2">
    <location>
        <begin position="235"/>
        <end position="271"/>
    </location>
</feature>
<feature type="compositionally biased region" description="Polar residues" evidence="2">
    <location>
        <begin position="262"/>
        <end position="271"/>
    </location>
</feature>